<sequence length="619" mass="66531">MPQYRSRTTTYGRNMAGARALWRATGMKDEDFEKPIIAVANSFTQFVPGHVHLKDLGQLVAREIERAGGVAKEFNTIAVDDGIAMGHGGMLYSLPSRDLIADSVEYMVNAHCADALVCISNCDKITPGMLMAALRLNIPAVFVSGGPMEAGKVILNGEERHLDLVDAMVVAADDRESDEDVATIERSACPTCGSCSGMFTANSMNCLTEALGLSLPGNGSLLATHGDRKELFLEAGRLAVKLAKQYYEQDDESVLPRSIASFKAFENAICLDIAMGGSTNTVLHLLAAAHEAGVDFTMKDIDRLSRKIPNLCKVAPSTQKYHMEDVHRAGGVIAILGELDRAGLLHREVPTVHSPSLGAALDQWDINRETATEEAKSRYLAAPGGVPTQEAFSQSKRWTALDLDRENGCIRDIEHAYSQDGGLAVLYGNLAEQGCIVKTAGVDENILVFSGPAVVCESQDEAVNWILNGRVKEGDVVLIRYEGPRGGPGMQEMLYPTSYLKSKGLGKACALITDGRFSGGTSGLSIGHVSPEAAEGGLIALVEQGDRIEIDIPNRRIHLAVSEEELAHRRAAMEARGDQAWTPKDRDRPISQALQAYAAMTTSAARGGVRDLSQILGSR</sequence>
<evidence type="ECO:0000255" key="1">
    <source>
        <dbReference type="HAMAP-Rule" id="MF_00012"/>
    </source>
</evidence>
<organism>
    <name type="scientific">Synechococcus elongatus (strain ATCC 33912 / PCC 7942 / FACHB-805)</name>
    <name type="common">Anacystis nidulans R2</name>
    <dbReference type="NCBI Taxonomy" id="1140"/>
    <lineage>
        <taxon>Bacteria</taxon>
        <taxon>Bacillati</taxon>
        <taxon>Cyanobacteriota</taxon>
        <taxon>Cyanophyceae</taxon>
        <taxon>Synechococcales</taxon>
        <taxon>Synechococcaceae</taxon>
        <taxon>Synechococcus</taxon>
    </lineage>
</organism>
<gene>
    <name evidence="1" type="primary">ilvD</name>
    <name type="ordered locus">Synpcc7942_0626</name>
</gene>
<accession>Q31QL1</accession>
<protein>
    <recommendedName>
        <fullName evidence="1">Dihydroxy-acid dehydratase</fullName>
        <shortName evidence="1">DAD</shortName>
        <ecNumber evidence="1">4.2.1.9</ecNumber>
    </recommendedName>
</protein>
<name>ILVD_SYNE7</name>
<dbReference type="EC" id="4.2.1.9" evidence="1"/>
<dbReference type="EMBL" id="CP000100">
    <property type="protein sequence ID" value="ABB56658.1"/>
    <property type="molecule type" value="Genomic_DNA"/>
</dbReference>
<dbReference type="RefSeq" id="WP_011243210.1">
    <property type="nucleotide sequence ID" value="NZ_JACJTX010000006.1"/>
</dbReference>
<dbReference type="SMR" id="Q31QL1"/>
<dbReference type="STRING" id="1140.Synpcc7942_0626"/>
<dbReference type="PaxDb" id="1140-Synpcc7942_0626"/>
<dbReference type="GeneID" id="72429458"/>
<dbReference type="KEGG" id="syf:Synpcc7942_0626"/>
<dbReference type="eggNOG" id="COG0129">
    <property type="taxonomic scope" value="Bacteria"/>
</dbReference>
<dbReference type="HOGENOM" id="CLU_014271_4_2_3"/>
<dbReference type="OrthoDB" id="9807077at2"/>
<dbReference type="BioCyc" id="SYNEL:SYNPCC7942_0626-MONOMER"/>
<dbReference type="UniPathway" id="UPA00047">
    <property type="reaction ID" value="UER00057"/>
</dbReference>
<dbReference type="UniPathway" id="UPA00049">
    <property type="reaction ID" value="UER00061"/>
</dbReference>
<dbReference type="Proteomes" id="UP000889800">
    <property type="component" value="Chromosome"/>
</dbReference>
<dbReference type="GO" id="GO:0005829">
    <property type="term" value="C:cytosol"/>
    <property type="evidence" value="ECO:0007669"/>
    <property type="project" value="TreeGrafter"/>
</dbReference>
<dbReference type="GO" id="GO:0051537">
    <property type="term" value="F:2 iron, 2 sulfur cluster binding"/>
    <property type="evidence" value="ECO:0007669"/>
    <property type="project" value="UniProtKB-UniRule"/>
</dbReference>
<dbReference type="GO" id="GO:0004160">
    <property type="term" value="F:dihydroxy-acid dehydratase activity"/>
    <property type="evidence" value="ECO:0007669"/>
    <property type="project" value="UniProtKB-UniRule"/>
</dbReference>
<dbReference type="GO" id="GO:0000287">
    <property type="term" value="F:magnesium ion binding"/>
    <property type="evidence" value="ECO:0007669"/>
    <property type="project" value="UniProtKB-UniRule"/>
</dbReference>
<dbReference type="GO" id="GO:0009097">
    <property type="term" value="P:isoleucine biosynthetic process"/>
    <property type="evidence" value="ECO:0007669"/>
    <property type="project" value="UniProtKB-UniRule"/>
</dbReference>
<dbReference type="GO" id="GO:0009099">
    <property type="term" value="P:L-valine biosynthetic process"/>
    <property type="evidence" value="ECO:0007669"/>
    <property type="project" value="UniProtKB-UniRule"/>
</dbReference>
<dbReference type="FunFam" id="3.50.30.80:FF:000001">
    <property type="entry name" value="Dihydroxy-acid dehydratase"/>
    <property type="match status" value="1"/>
</dbReference>
<dbReference type="Gene3D" id="3.50.30.80">
    <property type="entry name" value="IlvD/EDD C-terminal domain-like"/>
    <property type="match status" value="1"/>
</dbReference>
<dbReference type="HAMAP" id="MF_00012">
    <property type="entry name" value="IlvD"/>
    <property type="match status" value="1"/>
</dbReference>
<dbReference type="InterPro" id="IPR042096">
    <property type="entry name" value="Dihydro-acid_dehy_C"/>
</dbReference>
<dbReference type="InterPro" id="IPR004404">
    <property type="entry name" value="DihydroxyA_deHydtase"/>
</dbReference>
<dbReference type="InterPro" id="IPR020558">
    <property type="entry name" value="DiOHA_6PGluconate_deHydtase_CS"/>
</dbReference>
<dbReference type="InterPro" id="IPR056740">
    <property type="entry name" value="ILV_EDD_C"/>
</dbReference>
<dbReference type="InterPro" id="IPR000581">
    <property type="entry name" value="ILV_EDD_N"/>
</dbReference>
<dbReference type="InterPro" id="IPR037237">
    <property type="entry name" value="IlvD/EDD_N"/>
</dbReference>
<dbReference type="NCBIfam" id="TIGR00110">
    <property type="entry name" value="ilvD"/>
    <property type="match status" value="1"/>
</dbReference>
<dbReference type="NCBIfam" id="NF009103">
    <property type="entry name" value="PRK12448.1"/>
    <property type="match status" value="1"/>
</dbReference>
<dbReference type="PANTHER" id="PTHR43661">
    <property type="entry name" value="D-XYLONATE DEHYDRATASE"/>
    <property type="match status" value="1"/>
</dbReference>
<dbReference type="PANTHER" id="PTHR43661:SF3">
    <property type="entry name" value="D-XYLONATE DEHYDRATASE YAGF-RELATED"/>
    <property type="match status" value="1"/>
</dbReference>
<dbReference type="Pfam" id="PF24877">
    <property type="entry name" value="ILV_EDD_C"/>
    <property type="match status" value="1"/>
</dbReference>
<dbReference type="Pfam" id="PF00920">
    <property type="entry name" value="ILVD_EDD_N"/>
    <property type="match status" value="1"/>
</dbReference>
<dbReference type="SUPFAM" id="SSF143975">
    <property type="entry name" value="IlvD/EDD N-terminal domain-like"/>
    <property type="match status" value="1"/>
</dbReference>
<dbReference type="SUPFAM" id="SSF52016">
    <property type="entry name" value="LeuD/IlvD-like"/>
    <property type="match status" value="1"/>
</dbReference>
<dbReference type="PROSITE" id="PS00886">
    <property type="entry name" value="ILVD_EDD_1"/>
    <property type="match status" value="1"/>
</dbReference>
<dbReference type="PROSITE" id="PS00887">
    <property type="entry name" value="ILVD_EDD_2"/>
    <property type="match status" value="1"/>
</dbReference>
<feature type="chain" id="PRO_1000001075" description="Dihydroxy-acid dehydratase">
    <location>
        <begin position="1"/>
        <end position="619"/>
    </location>
</feature>
<feature type="active site" description="Proton acceptor" evidence="1">
    <location>
        <position position="518"/>
    </location>
</feature>
<feature type="binding site" evidence="1">
    <location>
        <position position="81"/>
    </location>
    <ligand>
        <name>Mg(2+)</name>
        <dbReference type="ChEBI" id="CHEBI:18420"/>
    </ligand>
</feature>
<feature type="binding site" evidence="1">
    <location>
        <position position="122"/>
    </location>
    <ligand>
        <name>[2Fe-2S] cluster</name>
        <dbReference type="ChEBI" id="CHEBI:190135"/>
    </ligand>
</feature>
<feature type="binding site" evidence="1">
    <location>
        <position position="123"/>
    </location>
    <ligand>
        <name>Mg(2+)</name>
        <dbReference type="ChEBI" id="CHEBI:18420"/>
    </ligand>
</feature>
<feature type="binding site" description="via carbamate group" evidence="1">
    <location>
        <position position="124"/>
    </location>
    <ligand>
        <name>Mg(2+)</name>
        <dbReference type="ChEBI" id="CHEBI:18420"/>
    </ligand>
</feature>
<feature type="binding site" evidence="1">
    <location>
        <position position="195"/>
    </location>
    <ligand>
        <name>[2Fe-2S] cluster</name>
        <dbReference type="ChEBI" id="CHEBI:190135"/>
    </ligand>
</feature>
<feature type="binding site" evidence="1">
    <location>
        <position position="492"/>
    </location>
    <ligand>
        <name>Mg(2+)</name>
        <dbReference type="ChEBI" id="CHEBI:18420"/>
    </ligand>
</feature>
<feature type="modified residue" description="N6-carboxylysine" evidence="1">
    <location>
        <position position="124"/>
    </location>
</feature>
<comment type="function">
    <text evidence="1">Functions in the biosynthesis of branched-chain amino acids. Catalyzes the dehydration of (2R,3R)-2,3-dihydroxy-3-methylpentanoate (2,3-dihydroxy-3-methylvalerate) into 2-oxo-3-methylpentanoate (2-oxo-3-methylvalerate) and of (2R)-2,3-dihydroxy-3-methylbutanoate (2,3-dihydroxyisovalerate) into 2-oxo-3-methylbutanoate (2-oxoisovalerate), the penultimate precursor to L-isoleucine and L-valine, respectively.</text>
</comment>
<comment type="catalytic activity">
    <reaction evidence="1">
        <text>(2R)-2,3-dihydroxy-3-methylbutanoate = 3-methyl-2-oxobutanoate + H2O</text>
        <dbReference type="Rhea" id="RHEA:24809"/>
        <dbReference type="ChEBI" id="CHEBI:11851"/>
        <dbReference type="ChEBI" id="CHEBI:15377"/>
        <dbReference type="ChEBI" id="CHEBI:49072"/>
        <dbReference type="EC" id="4.2.1.9"/>
    </reaction>
    <physiologicalReaction direction="left-to-right" evidence="1">
        <dbReference type="Rhea" id="RHEA:24810"/>
    </physiologicalReaction>
</comment>
<comment type="catalytic activity">
    <reaction evidence="1">
        <text>(2R,3R)-2,3-dihydroxy-3-methylpentanoate = (S)-3-methyl-2-oxopentanoate + H2O</text>
        <dbReference type="Rhea" id="RHEA:27694"/>
        <dbReference type="ChEBI" id="CHEBI:15377"/>
        <dbReference type="ChEBI" id="CHEBI:35146"/>
        <dbReference type="ChEBI" id="CHEBI:49258"/>
        <dbReference type="EC" id="4.2.1.9"/>
    </reaction>
    <physiologicalReaction direction="left-to-right" evidence="1">
        <dbReference type="Rhea" id="RHEA:27695"/>
    </physiologicalReaction>
</comment>
<comment type="cofactor">
    <cofactor evidence="1">
        <name>[2Fe-2S] cluster</name>
        <dbReference type="ChEBI" id="CHEBI:190135"/>
    </cofactor>
    <text evidence="1">Binds 1 [2Fe-2S] cluster per subunit. This cluster acts as a Lewis acid cofactor.</text>
</comment>
<comment type="cofactor">
    <cofactor evidence="1">
        <name>Mg(2+)</name>
        <dbReference type="ChEBI" id="CHEBI:18420"/>
    </cofactor>
</comment>
<comment type="pathway">
    <text evidence="1">Amino-acid biosynthesis; L-isoleucine biosynthesis; L-isoleucine from 2-oxobutanoate: step 3/4.</text>
</comment>
<comment type="pathway">
    <text evidence="1">Amino-acid biosynthesis; L-valine biosynthesis; L-valine from pyruvate: step 3/4.</text>
</comment>
<comment type="subunit">
    <text evidence="1">Homodimer.</text>
</comment>
<comment type="similarity">
    <text evidence="1">Belongs to the IlvD/Edd family.</text>
</comment>
<keyword id="KW-0001">2Fe-2S</keyword>
<keyword id="KW-0028">Amino-acid biosynthesis</keyword>
<keyword id="KW-0100">Branched-chain amino acid biosynthesis</keyword>
<keyword id="KW-0408">Iron</keyword>
<keyword id="KW-0411">Iron-sulfur</keyword>
<keyword id="KW-0456">Lyase</keyword>
<keyword id="KW-0460">Magnesium</keyword>
<keyword id="KW-0479">Metal-binding</keyword>
<keyword id="KW-1185">Reference proteome</keyword>
<proteinExistence type="inferred from homology"/>
<reference key="1">
    <citation type="submission" date="2005-08" db="EMBL/GenBank/DDBJ databases">
        <title>Complete sequence of chromosome 1 of Synechococcus elongatus PCC 7942.</title>
        <authorList>
            <consortium name="US DOE Joint Genome Institute"/>
            <person name="Copeland A."/>
            <person name="Lucas S."/>
            <person name="Lapidus A."/>
            <person name="Barry K."/>
            <person name="Detter J.C."/>
            <person name="Glavina T."/>
            <person name="Hammon N."/>
            <person name="Israni S."/>
            <person name="Pitluck S."/>
            <person name="Schmutz J."/>
            <person name="Larimer F."/>
            <person name="Land M."/>
            <person name="Kyrpides N."/>
            <person name="Lykidis A."/>
            <person name="Golden S."/>
            <person name="Richardson P."/>
        </authorList>
    </citation>
    <scope>NUCLEOTIDE SEQUENCE [LARGE SCALE GENOMIC DNA]</scope>
    <source>
        <strain>ATCC 33912 / PCC 7942 / FACHB-805</strain>
    </source>
</reference>